<evidence type="ECO:0000255" key="1">
    <source>
        <dbReference type="HAMAP-Rule" id="MF_01808"/>
    </source>
</evidence>
<evidence type="ECO:0000255" key="2">
    <source>
        <dbReference type="PROSITE-ProRule" id="PRU01246"/>
    </source>
</evidence>
<evidence type="ECO:0000255" key="3">
    <source>
        <dbReference type="PROSITE-ProRule" id="PRU01248"/>
    </source>
</evidence>
<name>XERC_ECO55</name>
<protein>
    <recommendedName>
        <fullName evidence="1">Tyrosine recombinase XerC</fullName>
    </recommendedName>
</protein>
<comment type="function">
    <text evidence="1">Site-specific tyrosine recombinase, which acts by catalyzing the cutting and rejoining of the recombining DNA molecules. Binds cooperatively to specific DNA consensus sequences that are separated from XerD binding sites by a short central region, forming the heterotetrameric XerC-XerD complex that recombines DNA substrates. The complex is essential to convert dimers of the bacterial chromosome into monomers to permit their segregation at cell division. It also contributes to the segregational stability of plasmids. In the complex XerC specifically exchanges the top DNA strands.</text>
</comment>
<comment type="activity regulation">
    <text evidence="1">FtsK may regulate the catalytic switch between XerC and XerD in the heterotetrameric complex during the two steps of the recombination process.</text>
</comment>
<comment type="subunit">
    <text evidence="1">Forms a cyclic heterotetrameric complex composed of two molecules of XerC and two molecules of XerD, in which XerC interacts with XerD via its C-terminal region, XerD interacts with XerC via its C-terminal region and so on.</text>
</comment>
<comment type="subcellular location">
    <subcellularLocation>
        <location evidence="1">Cytoplasm</location>
    </subcellularLocation>
</comment>
<comment type="similarity">
    <text evidence="1">Belongs to the 'phage' integrase family. XerC subfamily.</text>
</comment>
<sequence>MTDLHTDVERYLRYLSVERQLSPITLLNYQRQLEAIINFASENGLQSWQQCDVTMVRNFAVRSRRKGLGAASLALRLSALRSFFDWLVSQNELKANPAKGVSAPKAPRHLPKNIDVDDMNRLLDIDINDPLAVRDRAMLEVMYGAGLRLSELVGLDIKHLDLESGEVWVMGKGSKERRLPIGRNAVAWIEHWLDLRDLFGSEDDALFLSKLGKRISARNVQKRFAEWGIKQGLNNHVHPHKLRHSFATHMLESSGDLRGVQELLGHANLSTTQIYTHLDFQHLASVYDAAHPRAKRGK</sequence>
<organism>
    <name type="scientific">Escherichia coli (strain 55989 / EAEC)</name>
    <dbReference type="NCBI Taxonomy" id="585055"/>
    <lineage>
        <taxon>Bacteria</taxon>
        <taxon>Pseudomonadati</taxon>
        <taxon>Pseudomonadota</taxon>
        <taxon>Gammaproteobacteria</taxon>
        <taxon>Enterobacterales</taxon>
        <taxon>Enterobacteriaceae</taxon>
        <taxon>Escherichia</taxon>
    </lineage>
</organism>
<reference key="1">
    <citation type="journal article" date="2009" name="PLoS Genet.">
        <title>Organised genome dynamics in the Escherichia coli species results in highly diverse adaptive paths.</title>
        <authorList>
            <person name="Touchon M."/>
            <person name="Hoede C."/>
            <person name="Tenaillon O."/>
            <person name="Barbe V."/>
            <person name="Baeriswyl S."/>
            <person name="Bidet P."/>
            <person name="Bingen E."/>
            <person name="Bonacorsi S."/>
            <person name="Bouchier C."/>
            <person name="Bouvet O."/>
            <person name="Calteau A."/>
            <person name="Chiapello H."/>
            <person name="Clermont O."/>
            <person name="Cruveiller S."/>
            <person name="Danchin A."/>
            <person name="Diard M."/>
            <person name="Dossat C."/>
            <person name="Karoui M.E."/>
            <person name="Frapy E."/>
            <person name="Garry L."/>
            <person name="Ghigo J.M."/>
            <person name="Gilles A.M."/>
            <person name="Johnson J."/>
            <person name="Le Bouguenec C."/>
            <person name="Lescat M."/>
            <person name="Mangenot S."/>
            <person name="Martinez-Jehanne V."/>
            <person name="Matic I."/>
            <person name="Nassif X."/>
            <person name="Oztas S."/>
            <person name="Petit M.A."/>
            <person name="Pichon C."/>
            <person name="Rouy Z."/>
            <person name="Ruf C.S."/>
            <person name="Schneider D."/>
            <person name="Tourret J."/>
            <person name="Vacherie B."/>
            <person name="Vallenet D."/>
            <person name="Medigue C."/>
            <person name="Rocha E.P.C."/>
            <person name="Denamur E."/>
        </authorList>
    </citation>
    <scope>NUCLEOTIDE SEQUENCE [LARGE SCALE GENOMIC DNA]</scope>
    <source>
        <strain>55989 / EAEC</strain>
    </source>
</reference>
<dbReference type="EMBL" id="CU928145">
    <property type="protein sequence ID" value="CAV00939.1"/>
    <property type="molecule type" value="Genomic_DNA"/>
</dbReference>
<dbReference type="RefSeq" id="WP_000130691.1">
    <property type="nucleotide sequence ID" value="NC_011748.1"/>
</dbReference>
<dbReference type="SMR" id="B7L968"/>
<dbReference type="GeneID" id="75059707"/>
<dbReference type="KEGG" id="eck:EC55989_4285"/>
<dbReference type="HOGENOM" id="CLU_027562_9_0_6"/>
<dbReference type="Proteomes" id="UP000000746">
    <property type="component" value="Chromosome"/>
</dbReference>
<dbReference type="GO" id="GO:0005737">
    <property type="term" value="C:cytoplasm"/>
    <property type="evidence" value="ECO:0007669"/>
    <property type="project" value="UniProtKB-SubCell"/>
</dbReference>
<dbReference type="GO" id="GO:0003677">
    <property type="term" value="F:DNA binding"/>
    <property type="evidence" value="ECO:0007669"/>
    <property type="project" value="UniProtKB-KW"/>
</dbReference>
<dbReference type="GO" id="GO:0009037">
    <property type="term" value="F:tyrosine-based site-specific recombinase activity"/>
    <property type="evidence" value="ECO:0007669"/>
    <property type="project" value="UniProtKB-UniRule"/>
</dbReference>
<dbReference type="GO" id="GO:0051301">
    <property type="term" value="P:cell division"/>
    <property type="evidence" value="ECO:0007669"/>
    <property type="project" value="UniProtKB-KW"/>
</dbReference>
<dbReference type="GO" id="GO:0007059">
    <property type="term" value="P:chromosome segregation"/>
    <property type="evidence" value="ECO:0007669"/>
    <property type="project" value="UniProtKB-UniRule"/>
</dbReference>
<dbReference type="GO" id="GO:0006313">
    <property type="term" value="P:DNA transposition"/>
    <property type="evidence" value="ECO:0007669"/>
    <property type="project" value="UniProtKB-UniRule"/>
</dbReference>
<dbReference type="CDD" id="cd00798">
    <property type="entry name" value="INT_XerDC_C"/>
    <property type="match status" value="1"/>
</dbReference>
<dbReference type="FunFam" id="1.10.443.10:FF:000002">
    <property type="entry name" value="Tyrosine recombinase XerC"/>
    <property type="match status" value="1"/>
</dbReference>
<dbReference type="Gene3D" id="1.10.150.130">
    <property type="match status" value="1"/>
</dbReference>
<dbReference type="Gene3D" id="1.10.443.10">
    <property type="entry name" value="Intergrase catalytic core"/>
    <property type="match status" value="1"/>
</dbReference>
<dbReference type="HAMAP" id="MF_01808">
    <property type="entry name" value="Recomb_XerC_XerD"/>
    <property type="match status" value="1"/>
</dbReference>
<dbReference type="InterPro" id="IPR044068">
    <property type="entry name" value="CB"/>
</dbReference>
<dbReference type="InterPro" id="IPR011010">
    <property type="entry name" value="DNA_brk_join_enz"/>
</dbReference>
<dbReference type="InterPro" id="IPR013762">
    <property type="entry name" value="Integrase-like_cat_sf"/>
</dbReference>
<dbReference type="InterPro" id="IPR002104">
    <property type="entry name" value="Integrase_catalytic"/>
</dbReference>
<dbReference type="InterPro" id="IPR010998">
    <property type="entry name" value="Integrase_recombinase_N"/>
</dbReference>
<dbReference type="InterPro" id="IPR004107">
    <property type="entry name" value="Integrase_SAM-like_N"/>
</dbReference>
<dbReference type="InterPro" id="IPR011931">
    <property type="entry name" value="Recomb_XerC"/>
</dbReference>
<dbReference type="InterPro" id="IPR023009">
    <property type="entry name" value="Tyrosine_recombinase_XerC/XerD"/>
</dbReference>
<dbReference type="InterPro" id="IPR050090">
    <property type="entry name" value="Tyrosine_recombinase_XerCD"/>
</dbReference>
<dbReference type="NCBIfam" id="NF001399">
    <property type="entry name" value="PRK00283.1"/>
    <property type="match status" value="1"/>
</dbReference>
<dbReference type="NCBIfam" id="TIGR02224">
    <property type="entry name" value="recomb_XerC"/>
    <property type="match status" value="1"/>
</dbReference>
<dbReference type="PANTHER" id="PTHR30349">
    <property type="entry name" value="PHAGE INTEGRASE-RELATED"/>
    <property type="match status" value="1"/>
</dbReference>
<dbReference type="PANTHER" id="PTHR30349:SF81">
    <property type="entry name" value="TYROSINE RECOMBINASE XERC"/>
    <property type="match status" value="1"/>
</dbReference>
<dbReference type="Pfam" id="PF02899">
    <property type="entry name" value="Phage_int_SAM_1"/>
    <property type="match status" value="1"/>
</dbReference>
<dbReference type="Pfam" id="PF00589">
    <property type="entry name" value="Phage_integrase"/>
    <property type="match status" value="1"/>
</dbReference>
<dbReference type="SUPFAM" id="SSF56349">
    <property type="entry name" value="DNA breaking-rejoining enzymes"/>
    <property type="match status" value="1"/>
</dbReference>
<dbReference type="SUPFAM" id="SSF47823">
    <property type="entry name" value="lambda integrase-like, N-terminal domain"/>
    <property type="match status" value="1"/>
</dbReference>
<dbReference type="PROSITE" id="PS51900">
    <property type="entry name" value="CB"/>
    <property type="match status" value="1"/>
</dbReference>
<dbReference type="PROSITE" id="PS51898">
    <property type="entry name" value="TYR_RECOMBINASE"/>
    <property type="match status" value="1"/>
</dbReference>
<feature type="chain" id="PRO_1000187589" description="Tyrosine recombinase XerC">
    <location>
        <begin position="1"/>
        <end position="298"/>
    </location>
</feature>
<feature type="domain" description="Core-binding (CB)" evidence="3">
    <location>
        <begin position="2"/>
        <end position="88"/>
    </location>
</feature>
<feature type="domain" description="Tyr recombinase" evidence="2">
    <location>
        <begin position="109"/>
        <end position="288"/>
    </location>
</feature>
<feature type="active site" evidence="1">
    <location>
        <position position="148"/>
    </location>
</feature>
<feature type="active site" evidence="1">
    <location>
        <position position="172"/>
    </location>
</feature>
<feature type="active site" evidence="1">
    <location>
        <position position="240"/>
    </location>
</feature>
<feature type="active site" evidence="1">
    <location>
        <position position="243"/>
    </location>
</feature>
<feature type="active site" evidence="1">
    <location>
        <position position="266"/>
    </location>
</feature>
<feature type="active site" description="O-(3'-phospho-DNA)-tyrosine intermediate" evidence="1">
    <location>
        <position position="275"/>
    </location>
</feature>
<keyword id="KW-0131">Cell cycle</keyword>
<keyword id="KW-0132">Cell division</keyword>
<keyword id="KW-0159">Chromosome partition</keyword>
<keyword id="KW-0963">Cytoplasm</keyword>
<keyword id="KW-0229">DNA integration</keyword>
<keyword id="KW-0233">DNA recombination</keyword>
<keyword id="KW-0238">DNA-binding</keyword>
<keyword id="KW-1185">Reference proteome</keyword>
<accession>B7L968</accession>
<gene>
    <name evidence="1" type="primary">xerC</name>
    <name type="ordered locus">EC55989_4285</name>
</gene>
<proteinExistence type="inferred from homology"/>